<dbReference type="EMBL" id="U37792">
    <property type="protein sequence ID" value="AAB01724.1"/>
    <property type="molecule type" value="Genomic_DNA"/>
</dbReference>
<dbReference type="EMBL" id="CP001340">
    <property type="protein sequence ID" value="ACL96660.1"/>
    <property type="status" value="ALT_INIT"/>
    <property type="molecule type" value="Genomic_DNA"/>
</dbReference>
<dbReference type="RefSeq" id="YP_002518568.1">
    <property type="nucleotide sequence ID" value="NC_011916.1"/>
</dbReference>
<dbReference type="SMR" id="B8H3C3"/>
<dbReference type="GeneID" id="7330789"/>
<dbReference type="KEGG" id="ccs:CCNA_03195"/>
<dbReference type="PATRIC" id="fig|565050.3.peg.3122"/>
<dbReference type="HOGENOM" id="CLU_014793_3_5_5"/>
<dbReference type="OrthoDB" id="9809557at2"/>
<dbReference type="PhylomeDB" id="B8H3C3"/>
<dbReference type="Proteomes" id="UP000001364">
    <property type="component" value="Chromosome"/>
</dbReference>
<dbReference type="GO" id="GO:0005737">
    <property type="term" value="C:cytoplasm"/>
    <property type="evidence" value="ECO:0007669"/>
    <property type="project" value="UniProtKB-SubCell"/>
</dbReference>
<dbReference type="GO" id="GO:0003677">
    <property type="term" value="F:DNA binding"/>
    <property type="evidence" value="ECO:0007669"/>
    <property type="project" value="UniProtKB-UniRule"/>
</dbReference>
<dbReference type="GO" id="GO:0016987">
    <property type="term" value="F:sigma factor activity"/>
    <property type="evidence" value="ECO:0007669"/>
    <property type="project" value="UniProtKB-UniRule"/>
</dbReference>
<dbReference type="GO" id="GO:0006352">
    <property type="term" value="P:DNA-templated transcription initiation"/>
    <property type="evidence" value="ECO:0007669"/>
    <property type="project" value="UniProtKB-UniRule"/>
</dbReference>
<dbReference type="GO" id="GO:0009408">
    <property type="term" value="P:response to heat"/>
    <property type="evidence" value="ECO:0007669"/>
    <property type="project" value="UniProtKB-UniRule"/>
</dbReference>
<dbReference type="CDD" id="cd06171">
    <property type="entry name" value="Sigma70_r4"/>
    <property type="match status" value="1"/>
</dbReference>
<dbReference type="Gene3D" id="1.20.140.160">
    <property type="match status" value="1"/>
</dbReference>
<dbReference type="Gene3D" id="1.10.601.10">
    <property type="entry name" value="RNA Polymerase Primary Sigma Factor"/>
    <property type="match status" value="1"/>
</dbReference>
<dbReference type="HAMAP" id="MF_00961">
    <property type="entry name" value="Sigma70_RpoH"/>
    <property type="match status" value="1"/>
</dbReference>
<dbReference type="InterPro" id="IPR014284">
    <property type="entry name" value="RNA_pol_sigma-70_dom"/>
</dbReference>
<dbReference type="InterPro" id="IPR000943">
    <property type="entry name" value="RNA_pol_sigma70"/>
</dbReference>
<dbReference type="InterPro" id="IPR009042">
    <property type="entry name" value="RNA_pol_sigma70_r1_2"/>
</dbReference>
<dbReference type="InterPro" id="IPR007627">
    <property type="entry name" value="RNA_pol_sigma70_r2"/>
</dbReference>
<dbReference type="InterPro" id="IPR007630">
    <property type="entry name" value="RNA_pol_sigma70_r4"/>
</dbReference>
<dbReference type="InterPro" id="IPR013325">
    <property type="entry name" value="RNA_pol_sigma_r2"/>
</dbReference>
<dbReference type="InterPro" id="IPR013324">
    <property type="entry name" value="RNA_pol_sigma_r3/r4-like"/>
</dbReference>
<dbReference type="InterPro" id="IPR012759">
    <property type="entry name" value="RNA_pol_sigma_RpoH_proteobac"/>
</dbReference>
<dbReference type="InterPro" id="IPR050813">
    <property type="entry name" value="Sigma-70_Factor"/>
</dbReference>
<dbReference type="NCBIfam" id="NF005143">
    <property type="entry name" value="PRK06596.1"/>
    <property type="match status" value="1"/>
</dbReference>
<dbReference type="NCBIfam" id="TIGR02392">
    <property type="entry name" value="rpoH_proteo"/>
    <property type="match status" value="1"/>
</dbReference>
<dbReference type="NCBIfam" id="TIGR02937">
    <property type="entry name" value="sigma70-ECF"/>
    <property type="match status" value="1"/>
</dbReference>
<dbReference type="PANTHER" id="PTHR30376:SF3">
    <property type="entry name" value="RNA POLYMERASE SIGMA FACTOR RPOH"/>
    <property type="match status" value="1"/>
</dbReference>
<dbReference type="PANTHER" id="PTHR30376">
    <property type="entry name" value="SIGMA FACTOR RPOH HEAT SHOCK RELATED"/>
    <property type="match status" value="1"/>
</dbReference>
<dbReference type="Pfam" id="PF00140">
    <property type="entry name" value="Sigma70_r1_2"/>
    <property type="match status" value="1"/>
</dbReference>
<dbReference type="Pfam" id="PF04542">
    <property type="entry name" value="Sigma70_r2"/>
    <property type="match status" value="1"/>
</dbReference>
<dbReference type="Pfam" id="PF04545">
    <property type="entry name" value="Sigma70_r4"/>
    <property type="match status" value="1"/>
</dbReference>
<dbReference type="PIRSF" id="PIRSF000770">
    <property type="entry name" value="RNA_pol_sigma-SigE/K"/>
    <property type="match status" value="1"/>
</dbReference>
<dbReference type="PRINTS" id="PR00046">
    <property type="entry name" value="SIGMA70FCT"/>
</dbReference>
<dbReference type="SUPFAM" id="SSF88946">
    <property type="entry name" value="Sigma2 domain of RNA polymerase sigma factors"/>
    <property type="match status" value="1"/>
</dbReference>
<dbReference type="SUPFAM" id="SSF88659">
    <property type="entry name" value="Sigma3 and sigma4 domains of RNA polymerase sigma factors"/>
    <property type="match status" value="1"/>
</dbReference>
<dbReference type="PROSITE" id="PS00715">
    <property type="entry name" value="SIGMA70_1"/>
    <property type="match status" value="1"/>
</dbReference>
<dbReference type="PROSITE" id="PS00716">
    <property type="entry name" value="SIGMA70_2"/>
    <property type="match status" value="1"/>
</dbReference>
<reference key="1">
    <citation type="journal article" date="1996" name="J. Bacteriol.">
        <title>Regulation of a heat shock sigma32 homolog in Caulobacter crescentus.</title>
        <authorList>
            <person name="Reisenauer A.M."/>
            <person name="Mohr C.D."/>
            <person name="Shapiro L."/>
        </authorList>
    </citation>
    <scope>NUCLEOTIDE SEQUENCE [GENOMIC DNA]</scope>
</reference>
<reference key="2">
    <citation type="journal article" date="2010" name="J. Bacteriol.">
        <title>The genetic basis of laboratory adaptation in Caulobacter crescentus.</title>
        <authorList>
            <person name="Marks M.E."/>
            <person name="Castro-Rojas C.M."/>
            <person name="Teiling C."/>
            <person name="Du L."/>
            <person name="Kapatral V."/>
            <person name="Walunas T.L."/>
            <person name="Crosson S."/>
        </authorList>
    </citation>
    <scope>NUCLEOTIDE SEQUENCE [LARGE SCALE GENOMIC DNA]</scope>
    <source>
        <strain>NA1000 / CB15N</strain>
    </source>
</reference>
<keyword id="KW-0963">Cytoplasm</keyword>
<keyword id="KW-0238">DNA-binding</keyword>
<keyword id="KW-1185">Reference proteome</keyword>
<keyword id="KW-0731">Sigma factor</keyword>
<keyword id="KW-0346">Stress response</keyword>
<keyword id="KW-0804">Transcription</keyword>
<keyword id="KW-0805">Transcription regulation</keyword>
<name>RPOH_CAUVN</name>
<evidence type="ECO:0000255" key="1">
    <source>
        <dbReference type="HAMAP-Rule" id="MF_00961"/>
    </source>
</evidence>
<evidence type="ECO:0000305" key="2"/>
<feature type="chain" id="PRO_0000378312" description="RNA polymerase sigma factor RpoH">
    <location>
        <begin position="1"/>
        <end position="295"/>
    </location>
</feature>
<feature type="DNA-binding region" description="H-T-H motif" evidence="1">
    <location>
        <begin position="254"/>
        <end position="273"/>
    </location>
</feature>
<feature type="region of interest" description="Sigma-70 factor domain-2" evidence="1">
    <location>
        <begin position="52"/>
        <end position="121"/>
    </location>
</feature>
<feature type="region of interest" description="Sigma-70 factor domain-4" evidence="1">
    <location>
        <begin position="230"/>
        <end position="281"/>
    </location>
</feature>
<feature type="short sequence motif" description="Interaction with polymerase core subunit RpoC">
    <location>
        <begin position="76"/>
        <end position="79"/>
    </location>
</feature>
<feature type="sequence conflict" description="In Ref. 1; AAB01724." evidence="2" ref="1">
    <original>A</original>
    <variation>R</variation>
    <location>
        <position position="192"/>
    </location>
</feature>
<accession>B8H3C3</accession>
<accession>P48194</accession>
<accession>Q45995</accession>
<comment type="function">
    <text evidence="1">Sigma factors are initiation factors that promote the attachment of RNA polymerase to specific initiation sites and are then released. This sigma factor is involved in regulation of expression of heat shock genes.</text>
</comment>
<comment type="subunit">
    <text evidence="1">Interacts with the RNA polymerase core enzyme.</text>
</comment>
<comment type="subcellular location">
    <subcellularLocation>
        <location evidence="1">Cytoplasm</location>
    </subcellularLocation>
</comment>
<comment type="similarity">
    <text evidence="1">Belongs to the sigma-70 factor family. RpoH subfamily.</text>
</comment>
<comment type="sequence caution" evidence="2">
    <conflict type="erroneous initiation">
        <sequence resource="EMBL-CDS" id="ACL96660"/>
    </conflict>
</comment>
<protein>
    <recommendedName>
        <fullName evidence="1">RNA polymerase sigma factor RpoH</fullName>
    </recommendedName>
    <alternativeName>
        <fullName evidence="1">RNA polymerase sigma-32 factor</fullName>
    </alternativeName>
</protein>
<sequence length="295" mass="33660">MAVNSLSVMSPDGGLSRYLTEIRKFPMLSKDEEFMLAQRWKEHQDPQAAHKMVTSHLRLVAKIAMGYRGYGLPIGEVISEGNVGLMQAVKKFEPEKGFRLATYAMWWIRASIQEYILRSWSLVKMGTTAAQKKLFFNLRKAKSQIAAFQEGDLHPDQVSQIATKLGVLDSEVISMNRRLSGPDASLNAPLRADGESEWQDWLADEEQVSQETRVAEDEEKSLRMSLLEEAMVELTDRERHILTERRLKDDPTTLEELAAQYGVSRERVRQIEVRAFEKLQKTMREAAIAKNMVDA</sequence>
<gene>
    <name evidence="1" type="primary">rpoH</name>
    <name type="ordered locus">CCNA_03195</name>
</gene>
<proteinExistence type="inferred from homology"/>
<organism>
    <name type="scientific">Caulobacter vibrioides (strain NA1000 / CB15N)</name>
    <name type="common">Caulobacter crescentus</name>
    <dbReference type="NCBI Taxonomy" id="565050"/>
    <lineage>
        <taxon>Bacteria</taxon>
        <taxon>Pseudomonadati</taxon>
        <taxon>Pseudomonadota</taxon>
        <taxon>Alphaproteobacteria</taxon>
        <taxon>Caulobacterales</taxon>
        <taxon>Caulobacteraceae</taxon>
        <taxon>Caulobacter</taxon>
    </lineage>
</organism>